<proteinExistence type="evidence at transcript level"/>
<comment type="function">
    <text evidence="1">Involved in the recognition of invading microorganisms. Binds specifically to beta-1,3-glucan and activates the phenoloxidase cascade (By similarity).</text>
</comment>
<comment type="subcellular location">
    <subcellularLocation>
        <location evidence="2">Secreted</location>
    </subcellularLocation>
</comment>
<comment type="alternative products">
    <event type="alternative splicing"/>
    <isoform>
        <id>Q9VVR4-1</id>
        <name evidence="7">B</name>
        <sequence type="displayed"/>
    </isoform>
    <isoform>
        <id>Q9VVR4-3</id>
        <name>A</name>
        <sequence type="described" ref="VSP_026674"/>
    </isoform>
    <isoform>
        <id>Q9VVR4-2</id>
        <name evidence="10">C</name>
        <sequence type="described" ref="VSP_051600 VSP_051601 VSP_051602"/>
    </isoform>
    <isoform>
        <id>Q9VVR4-4</id>
        <name>D</name>
        <sequence type="described" ref="VSP_051600"/>
    </isoform>
</comment>
<comment type="developmental stage">
    <text evidence="7">Expressed at very low levels during embryonic development and at moderate levels in the larva, prepupal, pupal and adult stages.</text>
</comment>
<comment type="similarity">
    <text evidence="10">Belongs to the insect beta-1,3-glucan binding protein family.</text>
</comment>
<dbReference type="EMBL" id="AF228473">
    <property type="protein sequence ID" value="AAF33850.1"/>
    <property type="molecule type" value="mRNA"/>
</dbReference>
<dbReference type="EMBL" id="AM050207">
    <property type="protein sequence ID" value="CAJ19007.1"/>
    <property type="molecule type" value="Genomic_DNA"/>
</dbReference>
<dbReference type="EMBL" id="AM050207">
    <property type="protein sequence ID" value="CAJ19008.1"/>
    <property type="molecule type" value="Genomic_DNA"/>
</dbReference>
<dbReference type="EMBL" id="AM050207">
    <property type="protein sequence ID" value="CAJ19009.1"/>
    <property type="molecule type" value="Genomic_DNA"/>
</dbReference>
<dbReference type="EMBL" id="AM050207">
    <property type="protein sequence ID" value="CAJ19010.1"/>
    <property type="molecule type" value="Genomic_DNA"/>
</dbReference>
<dbReference type="EMBL" id="AM050208">
    <property type="protein sequence ID" value="CAJ19011.1"/>
    <property type="molecule type" value="Genomic_DNA"/>
</dbReference>
<dbReference type="EMBL" id="AM050208">
    <property type="protein sequence ID" value="CAJ19012.1"/>
    <property type="molecule type" value="Genomic_DNA"/>
</dbReference>
<dbReference type="EMBL" id="AM050208">
    <property type="protein sequence ID" value="CAJ19013.1"/>
    <property type="molecule type" value="Genomic_DNA"/>
</dbReference>
<dbReference type="EMBL" id="AM050208">
    <property type="protein sequence ID" value="CAJ19014.1"/>
    <property type="molecule type" value="Genomic_DNA"/>
</dbReference>
<dbReference type="EMBL" id="AM050209">
    <property type="protein sequence ID" value="CAJ19015.1"/>
    <property type="molecule type" value="Genomic_DNA"/>
</dbReference>
<dbReference type="EMBL" id="AM050209">
    <property type="protein sequence ID" value="CAJ19016.1"/>
    <property type="molecule type" value="Genomic_DNA"/>
</dbReference>
<dbReference type="EMBL" id="AM050209">
    <property type="protein sequence ID" value="CAJ19017.1"/>
    <property type="molecule type" value="Genomic_DNA"/>
</dbReference>
<dbReference type="EMBL" id="AM050209">
    <property type="protein sequence ID" value="CAJ19018.1"/>
    <property type="molecule type" value="Genomic_DNA"/>
</dbReference>
<dbReference type="EMBL" id="AM050210">
    <property type="protein sequence ID" value="CAJ19019.1"/>
    <property type="molecule type" value="Genomic_DNA"/>
</dbReference>
<dbReference type="EMBL" id="AM050210">
    <property type="protein sequence ID" value="CAJ19020.1"/>
    <property type="molecule type" value="Genomic_DNA"/>
</dbReference>
<dbReference type="EMBL" id="AM050210">
    <property type="protein sequence ID" value="CAJ19021.1"/>
    <property type="molecule type" value="Genomic_DNA"/>
</dbReference>
<dbReference type="EMBL" id="AM050210">
    <property type="protein sequence ID" value="CAJ19022.1"/>
    <property type="molecule type" value="Genomic_DNA"/>
</dbReference>
<dbReference type="EMBL" id="AM050211">
    <property type="protein sequence ID" value="CAJ19023.1"/>
    <property type="molecule type" value="Genomic_DNA"/>
</dbReference>
<dbReference type="EMBL" id="AM050211">
    <property type="protein sequence ID" value="CAJ19024.1"/>
    <property type="molecule type" value="Genomic_DNA"/>
</dbReference>
<dbReference type="EMBL" id="AM050211">
    <property type="protein sequence ID" value="CAJ19025.1"/>
    <property type="molecule type" value="Genomic_DNA"/>
</dbReference>
<dbReference type="EMBL" id="AM050211">
    <property type="protein sequence ID" value="CAJ19026.1"/>
    <property type="molecule type" value="Genomic_DNA"/>
</dbReference>
<dbReference type="EMBL" id="AM050212">
    <property type="protein sequence ID" value="CAJ19027.1"/>
    <property type="molecule type" value="Genomic_DNA"/>
</dbReference>
<dbReference type="EMBL" id="AM050212">
    <property type="protein sequence ID" value="CAJ19028.1"/>
    <property type="molecule type" value="Genomic_DNA"/>
</dbReference>
<dbReference type="EMBL" id="AM050212">
    <property type="protein sequence ID" value="CAJ19029.1"/>
    <property type="molecule type" value="Genomic_DNA"/>
</dbReference>
<dbReference type="EMBL" id="AM050212">
    <property type="protein sequence ID" value="CAJ19030.1"/>
    <property type="molecule type" value="Genomic_DNA"/>
</dbReference>
<dbReference type="EMBL" id="AM050213">
    <property type="protein sequence ID" value="CAJ19031.1"/>
    <property type="molecule type" value="Genomic_DNA"/>
</dbReference>
<dbReference type="EMBL" id="AM050213">
    <property type="protein sequence ID" value="CAJ19032.1"/>
    <property type="molecule type" value="Genomic_DNA"/>
</dbReference>
<dbReference type="EMBL" id="AM050213">
    <property type="protein sequence ID" value="CAJ19033.1"/>
    <property type="molecule type" value="Genomic_DNA"/>
</dbReference>
<dbReference type="EMBL" id="AM050213">
    <property type="protein sequence ID" value="CAJ19034.1"/>
    <property type="molecule type" value="Genomic_DNA"/>
</dbReference>
<dbReference type="EMBL" id="AM050214">
    <property type="protein sequence ID" value="CAJ19035.1"/>
    <property type="molecule type" value="Genomic_DNA"/>
</dbReference>
<dbReference type="EMBL" id="AM050214">
    <property type="protein sequence ID" value="CAJ19036.1"/>
    <property type="molecule type" value="Genomic_DNA"/>
</dbReference>
<dbReference type="EMBL" id="AM050214">
    <property type="protein sequence ID" value="CAJ19037.1"/>
    <property type="molecule type" value="Genomic_DNA"/>
</dbReference>
<dbReference type="EMBL" id="AM050214">
    <property type="protein sequence ID" value="CAJ19038.1"/>
    <property type="molecule type" value="Genomic_DNA"/>
</dbReference>
<dbReference type="EMBL" id="AM050215">
    <property type="protein sequence ID" value="CAJ19039.1"/>
    <property type="molecule type" value="Genomic_DNA"/>
</dbReference>
<dbReference type="EMBL" id="AM050215">
    <property type="protein sequence ID" value="CAJ19040.1"/>
    <property type="molecule type" value="Genomic_DNA"/>
</dbReference>
<dbReference type="EMBL" id="AM050215">
    <property type="protein sequence ID" value="CAJ19041.1"/>
    <property type="molecule type" value="Genomic_DNA"/>
</dbReference>
<dbReference type="EMBL" id="AM050215">
    <property type="protein sequence ID" value="CAJ19042.1"/>
    <property type="molecule type" value="Genomic_DNA"/>
</dbReference>
<dbReference type="EMBL" id="AM050216">
    <property type="protein sequence ID" value="CAJ19043.1"/>
    <property type="molecule type" value="Genomic_DNA"/>
</dbReference>
<dbReference type="EMBL" id="AM050216">
    <property type="protein sequence ID" value="CAJ19044.1"/>
    <property type="molecule type" value="Genomic_DNA"/>
</dbReference>
<dbReference type="EMBL" id="AM050216">
    <property type="protein sequence ID" value="CAJ19045.1"/>
    <property type="molecule type" value="Genomic_DNA"/>
</dbReference>
<dbReference type="EMBL" id="AM050216">
    <property type="protein sequence ID" value="CAJ19046.1"/>
    <property type="molecule type" value="Genomic_DNA"/>
</dbReference>
<dbReference type="EMBL" id="AM050217">
    <property type="protein sequence ID" value="CAJ19047.1"/>
    <property type="molecule type" value="Genomic_DNA"/>
</dbReference>
<dbReference type="EMBL" id="AM050217">
    <property type="protein sequence ID" value="CAJ19048.1"/>
    <property type="molecule type" value="Genomic_DNA"/>
</dbReference>
<dbReference type="EMBL" id="AM050217">
    <property type="protein sequence ID" value="CAJ19049.1"/>
    <property type="molecule type" value="Genomic_DNA"/>
</dbReference>
<dbReference type="EMBL" id="AM050217">
    <property type="protein sequence ID" value="CAJ19050.1"/>
    <property type="molecule type" value="Genomic_DNA"/>
</dbReference>
<dbReference type="EMBL" id="AM050218">
    <property type="protein sequence ID" value="CAJ19051.1"/>
    <property type="molecule type" value="Genomic_DNA"/>
</dbReference>
<dbReference type="EMBL" id="AM050218">
    <property type="protein sequence ID" value="CAJ19052.1"/>
    <property type="molecule type" value="Genomic_DNA"/>
</dbReference>
<dbReference type="EMBL" id="AM050218">
    <property type="protein sequence ID" value="CAJ19053.1"/>
    <property type="molecule type" value="Genomic_DNA"/>
</dbReference>
<dbReference type="EMBL" id="AM050218">
    <property type="protein sequence ID" value="CAJ19054.1"/>
    <property type="molecule type" value="Genomic_DNA"/>
</dbReference>
<dbReference type="EMBL" id="AE014296">
    <property type="protein sequence ID" value="AAF49245.3"/>
    <property type="molecule type" value="Genomic_DNA"/>
</dbReference>
<dbReference type="EMBL" id="AE014296">
    <property type="protein sequence ID" value="AAF49246.3"/>
    <property type="molecule type" value="Genomic_DNA"/>
</dbReference>
<dbReference type="EMBL" id="AE014296">
    <property type="protein sequence ID" value="AAN11665.1"/>
    <property type="molecule type" value="Genomic_DNA"/>
</dbReference>
<dbReference type="EMBL" id="AE014296">
    <property type="protein sequence ID" value="AAN11666.1"/>
    <property type="molecule type" value="Genomic_DNA"/>
</dbReference>
<dbReference type="EMBL" id="AY058277">
    <property type="protein sequence ID" value="AAL13506.1"/>
    <property type="molecule type" value="mRNA"/>
</dbReference>
<dbReference type="RefSeq" id="NP_524141.1">
    <molecule id="Q9VVR4-1"/>
    <property type="nucleotide sequence ID" value="NM_079417.3"/>
</dbReference>
<dbReference type="RefSeq" id="NP_730350.1">
    <molecule id="Q9VVR4-3"/>
    <property type="nucleotide sequence ID" value="NM_168771.2"/>
</dbReference>
<dbReference type="RefSeq" id="NP_730351.1">
    <molecule id="Q9VVR4-4"/>
    <property type="nucleotide sequence ID" value="NM_168772.2"/>
</dbReference>
<dbReference type="SMR" id="Q9VVR4"/>
<dbReference type="BioGRID" id="65314">
    <property type="interactions" value="1"/>
</dbReference>
<dbReference type="FunCoup" id="Q9VVR4">
    <property type="interactions" value="15"/>
</dbReference>
<dbReference type="STRING" id="7227.FBpp0074861"/>
<dbReference type="CAZy" id="CBM39">
    <property type="family name" value="Carbohydrate-Binding Module Family 39"/>
</dbReference>
<dbReference type="CAZy" id="GH16">
    <property type="family name" value="Glycoside Hydrolase Family 16"/>
</dbReference>
<dbReference type="GlyCosmos" id="Q9VVR4">
    <property type="glycosylation" value="4 sites, No reported glycans"/>
</dbReference>
<dbReference type="GlyGen" id="Q9VVR4">
    <property type="glycosylation" value="4 sites"/>
</dbReference>
<dbReference type="PaxDb" id="7227-FBpp0074861"/>
<dbReference type="DNASU" id="40033"/>
<dbReference type="EnsemblMetazoa" id="FBtr0075094">
    <molecule id="Q9VVR4-1"/>
    <property type="protein sequence ID" value="FBpp0074861"/>
    <property type="gene ID" value="FBgn0040322"/>
</dbReference>
<dbReference type="EnsemblMetazoa" id="FBtr0075095">
    <molecule id="Q9VVR4-3"/>
    <property type="protein sequence ID" value="FBpp0074862"/>
    <property type="gene ID" value="FBgn0040322"/>
</dbReference>
<dbReference type="EnsemblMetazoa" id="FBtr0075096">
    <molecule id="Q9VVR4-4"/>
    <property type="protein sequence ID" value="FBpp0074863"/>
    <property type="gene ID" value="FBgn0040322"/>
</dbReference>
<dbReference type="GeneID" id="40033"/>
<dbReference type="KEGG" id="dme:Dmel_CG4144"/>
<dbReference type="AGR" id="FB:FBgn0040322"/>
<dbReference type="CTD" id="40033"/>
<dbReference type="FlyBase" id="FBgn0040322">
    <property type="gene designation" value="GNBP2"/>
</dbReference>
<dbReference type="VEuPathDB" id="VectorBase:FBgn0040322"/>
<dbReference type="eggNOG" id="ENOG502RTM3">
    <property type="taxonomic scope" value="Eukaryota"/>
</dbReference>
<dbReference type="GeneTree" id="ENSGT00940000173596"/>
<dbReference type="InParanoid" id="Q9VVR4"/>
<dbReference type="OMA" id="DTWAPTW"/>
<dbReference type="OrthoDB" id="4781at2759"/>
<dbReference type="PhylomeDB" id="Q9VVR4"/>
<dbReference type="BioGRID-ORCS" id="40033">
    <property type="hits" value="0 hits in 1 CRISPR screen"/>
</dbReference>
<dbReference type="ChiTaRS" id="GNBP2">
    <property type="organism name" value="fly"/>
</dbReference>
<dbReference type="GenomeRNAi" id="40033"/>
<dbReference type="PRO" id="PR:Q9VVR4"/>
<dbReference type="Proteomes" id="UP000000803">
    <property type="component" value="Chromosome 3L"/>
</dbReference>
<dbReference type="Bgee" id="FBgn0040322">
    <property type="expression patterns" value="Expressed in epithelial cell in haltere and 52 other cell types or tissues"/>
</dbReference>
<dbReference type="ExpressionAtlas" id="Q9VVR4">
    <property type="expression patterns" value="baseline and differential"/>
</dbReference>
<dbReference type="GO" id="GO:0005576">
    <property type="term" value="C:extracellular region"/>
    <property type="evidence" value="ECO:0000250"/>
    <property type="project" value="UniProtKB"/>
</dbReference>
<dbReference type="GO" id="GO:0001872">
    <property type="term" value="F:(1-&gt;3)-beta-D-glucan binding"/>
    <property type="evidence" value="ECO:0000314"/>
    <property type="project" value="FlyBase"/>
</dbReference>
<dbReference type="GO" id="GO:0001530">
    <property type="term" value="F:lipopolysaccharide binding"/>
    <property type="evidence" value="ECO:0000314"/>
    <property type="project" value="FlyBase"/>
</dbReference>
<dbReference type="GO" id="GO:0038187">
    <property type="term" value="F:pattern recognition receptor activity"/>
    <property type="evidence" value="ECO:0000250"/>
    <property type="project" value="FlyBase"/>
</dbReference>
<dbReference type="GO" id="GO:0005975">
    <property type="term" value="P:carbohydrate metabolic process"/>
    <property type="evidence" value="ECO:0007669"/>
    <property type="project" value="InterPro"/>
</dbReference>
<dbReference type="GO" id="GO:0045087">
    <property type="term" value="P:innate immune response"/>
    <property type="evidence" value="ECO:0007669"/>
    <property type="project" value="UniProtKB-KW"/>
</dbReference>
<dbReference type="GO" id="GO:0002758">
    <property type="term" value="P:innate immune response-activating signaling pathway"/>
    <property type="evidence" value="ECO:0000250"/>
    <property type="project" value="FlyBase"/>
</dbReference>
<dbReference type="GO" id="GO:0002221">
    <property type="term" value="P:pattern recognition receptor signaling pathway"/>
    <property type="evidence" value="ECO:0000250"/>
    <property type="project" value="UniProtKB"/>
</dbReference>
<dbReference type="GO" id="GO:0045088">
    <property type="term" value="P:regulation of innate immune response"/>
    <property type="evidence" value="ECO:0000250"/>
    <property type="project" value="UniProtKB"/>
</dbReference>
<dbReference type="CDD" id="cd02179">
    <property type="entry name" value="GH16_beta_GRP"/>
    <property type="match status" value="1"/>
</dbReference>
<dbReference type="FunFam" id="2.60.120.200:FF:000321">
    <property type="entry name" value="Uncharacterized protein, isoform A"/>
    <property type="match status" value="1"/>
</dbReference>
<dbReference type="FunFam" id="2.60.40.2140:FF:000003">
    <property type="entry name" value="Uncharacterized protein, isoform A"/>
    <property type="match status" value="1"/>
</dbReference>
<dbReference type="Gene3D" id="2.60.120.200">
    <property type="match status" value="1"/>
</dbReference>
<dbReference type="Gene3D" id="2.60.40.2140">
    <property type="entry name" value="Beta-1,3-glucan-recognition protein, N-terminal domain"/>
    <property type="match status" value="1"/>
</dbReference>
<dbReference type="InterPro" id="IPR031756">
    <property type="entry name" value="BGBP_N"/>
</dbReference>
<dbReference type="InterPro" id="IPR043030">
    <property type="entry name" value="BGBP_N_sf"/>
</dbReference>
<dbReference type="InterPro" id="IPR013320">
    <property type="entry name" value="ConA-like_dom_sf"/>
</dbReference>
<dbReference type="InterPro" id="IPR000757">
    <property type="entry name" value="GH16"/>
</dbReference>
<dbReference type="InterPro" id="IPR035806">
    <property type="entry name" value="GH16_GRP_C"/>
</dbReference>
<dbReference type="InterPro" id="IPR050546">
    <property type="entry name" value="Glycosyl_Hydrlase_16"/>
</dbReference>
<dbReference type="PANTHER" id="PTHR10963">
    <property type="entry name" value="GLYCOSYL HYDROLASE-RELATED"/>
    <property type="match status" value="1"/>
</dbReference>
<dbReference type="PANTHER" id="PTHR10963:SF60">
    <property type="entry name" value="GRAM-NEGATIVE BACTERIA-BINDING PROTEIN 1-RELATED"/>
    <property type="match status" value="1"/>
</dbReference>
<dbReference type="Pfam" id="PF15886">
    <property type="entry name" value="CBM39"/>
    <property type="match status" value="1"/>
</dbReference>
<dbReference type="Pfam" id="PF00722">
    <property type="entry name" value="Glyco_hydro_16"/>
    <property type="match status" value="1"/>
</dbReference>
<dbReference type="SUPFAM" id="SSF49899">
    <property type="entry name" value="Concanavalin A-like lectins/glucanases"/>
    <property type="match status" value="1"/>
</dbReference>
<dbReference type="PROSITE" id="PS51969">
    <property type="entry name" value="CBM39"/>
    <property type="match status" value="1"/>
</dbReference>
<dbReference type="PROSITE" id="PS51762">
    <property type="entry name" value="GH16_2"/>
    <property type="match status" value="1"/>
</dbReference>
<keyword id="KW-0025">Alternative splicing</keyword>
<keyword id="KW-0325">Glycoprotein</keyword>
<keyword id="KW-0391">Immunity</keyword>
<keyword id="KW-0399">Innate immunity</keyword>
<keyword id="KW-1185">Reference proteome</keyword>
<keyword id="KW-0964">Secreted</keyword>
<keyword id="KW-0732">Signal</keyword>
<reference evidence="10 11" key="1">
    <citation type="journal article" date="2000" name="J. Biol. Chem.">
        <title>Gram-negative bacteria-binding protein, a pattern recognition receptor for lipopolysaccharide and beta-1,3-glucan that mediates the signaling for the induction of innate immune genes in Drosophila melanogaster cells.</title>
        <authorList>
            <person name="Kim Y.-S."/>
            <person name="Ryu J.-H."/>
            <person name="Han S.-J."/>
            <person name="Choi K.-H."/>
            <person name="Nam K.-B."/>
            <person name="Jang I.-H."/>
            <person name="Lemaitre B."/>
            <person name="Brey P.T."/>
            <person name="Lee W.-J."/>
        </authorList>
    </citation>
    <scope>NUCLEOTIDE SEQUENCE [MRNA] (ISOFORM B)</scope>
    <scope>DEVELOPMENTAL STAGE</scope>
</reference>
<reference key="2">
    <citation type="journal article" date="2006" name="J. Mol. Evol.">
        <title>Contrasting evolutionary patterns in Drosophila immune receptors.</title>
        <authorList>
            <person name="Jiggins F.M."/>
            <person name="Kim K.W."/>
        </authorList>
    </citation>
    <scope>NUCLEOTIDE SEQUENCE [GENOMIC DNA]</scope>
    <scope>ALTERNATIVE SPLICING</scope>
    <source>
        <strain>Netherlands line N01</strain>
        <strain>Netherlands line N02</strain>
        <strain>Netherlands line N03</strain>
        <strain>Netherlands line N06</strain>
        <strain>Netherlands line N07</strain>
        <strain>Netherlands line N14</strain>
        <strain>Netherlands line N15</strain>
        <strain>Netherlands line N16</strain>
        <strain>Netherlands line N17</strain>
        <strain>Netherlands line N22</strain>
        <strain>Netherlands line N29</strain>
        <strain>Netherlands line N30</strain>
    </source>
</reference>
<reference evidence="12" key="3">
    <citation type="journal article" date="2000" name="Science">
        <title>The genome sequence of Drosophila melanogaster.</title>
        <authorList>
            <person name="Adams M.D."/>
            <person name="Celniker S.E."/>
            <person name="Holt R.A."/>
            <person name="Evans C.A."/>
            <person name="Gocayne J.D."/>
            <person name="Amanatides P.G."/>
            <person name="Scherer S.E."/>
            <person name="Li P.W."/>
            <person name="Hoskins R.A."/>
            <person name="Galle R.F."/>
            <person name="George R.A."/>
            <person name="Lewis S.E."/>
            <person name="Richards S."/>
            <person name="Ashburner M."/>
            <person name="Henderson S.N."/>
            <person name="Sutton G.G."/>
            <person name="Wortman J.R."/>
            <person name="Yandell M.D."/>
            <person name="Zhang Q."/>
            <person name="Chen L.X."/>
            <person name="Brandon R.C."/>
            <person name="Rogers Y.-H.C."/>
            <person name="Blazej R.G."/>
            <person name="Champe M."/>
            <person name="Pfeiffer B.D."/>
            <person name="Wan K.H."/>
            <person name="Doyle C."/>
            <person name="Baxter E.G."/>
            <person name="Helt G."/>
            <person name="Nelson C.R."/>
            <person name="Miklos G.L.G."/>
            <person name="Abril J.F."/>
            <person name="Agbayani A."/>
            <person name="An H.-J."/>
            <person name="Andrews-Pfannkoch C."/>
            <person name="Baldwin D."/>
            <person name="Ballew R.M."/>
            <person name="Basu A."/>
            <person name="Baxendale J."/>
            <person name="Bayraktaroglu L."/>
            <person name="Beasley E.M."/>
            <person name="Beeson K.Y."/>
            <person name="Benos P.V."/>
            <person name="Berman B.P."/>
            <person name="Bhandari D."/>
            <person name="Bolshakov S."/>
            <person name="Borkova D."/>
            <person name="Botchan M.R."/>
            <person name="Bouck J."/>
            <person name="Brokstein P."/>
            <person name="Brottier P."/>
            <person name="Burtis K.C."/>
            <person name="Busam D.A."/>
            <person name="Butler H."/>
            <person name="Cadieu E."/>
            <person name="Center A."/>
            <person name="Chandra I."/>
            <person name="Cherry J.M."/>
            <person name="Cawley S."/>
            <person name="Dahlke C."/>
            <person name="Davenport L.B."/>
            <person name="Davies P."/>
            <person name="de Pablos B."/>
            <person name="Delcher A."/>
            <person name="Deng Z."/>
            <person name="Mays A.D."/>
            <person name="Dew I."/>
            <person name="Dietz S.M."/>
            <person name="Dodson K."/>
            <person name="Doup L.E."/>
            <person name="Downes M."/>
            <person name="Dugan-Rocha S."/>
            <person name="Dunkov B.C."/>
            <person name="Dunn P."/>
            <person name="Durbin K.J."/>
            <person name="Evangelista C.C."/>
            <person name="Ferraz C."/>
            <person name="Ferriera S."/>
            <person name="Fleischmann W."/>
            <person name="Fosler C."/>
            <person name="Gabrielian A.E."/>
            <person name="Garg N.S."/>
            <person name="Gelbart W.M."/>
            <person name="Glasser K."/>
            <person name="Glodek A."/>
            <person name="Gong F."/>
            <person name="Gorrell J.H."/>
            <person name="Gu Z."/>
            <person name="Guan P."/>
            <person name="Harris M."/>
            <person name="Harris N.L."/>
            <person name="Harvey D.A."/>
            <person name="Heiman T.J."/>
            <person name="Hernandez J.R."/>
            <person name="Houck J."/>
            <person name="Hostin D."/>
            <person name="Houston K.A."/>
            <person name="Howland T.J."/>
            <person name="Wei M.-H."/>
            <person name="Ibegwam C."/>
            <person name="Jalali M."/>
            <person name="Kalush F."/>
            <person name="Karpen G.H."/>
            <person name="Ke Z."/>
            <person name="Kennison J.A."/>
            <person name="Ketchum K.A."/>
            <person name="Kimmel B.E."/>
            <person name="Kodira C.D."/>
            <person name="Kraft C.L."/>
            <person name="Kravitz S."/>
            <person name="Kulp D."/>
            <person name="Lai Z."/>
            <person name="Lasko P."/>
            <person name="Lei Y."/>
            <person name="Levitsky A.A."/>
            <person name="Li J.H."/>
            <person name="Li Z."/>
            <person name="Liang Y."/>
            <person name="Lin X."/>
            <person name="Liu X."/>
            <person name="Mattei B."/>
            <person name="McIntosh T.C."/>
            <person name="McLeod M.P."/>
            <person name="McPherson D."/>
            <person name="Merkulov G."/>
            <person name="Milshina N.V."/>
            <person name="Mobarry C."/>
            <person name="Morris J."/>
            <person name="Moshrefi A."/>
            <person name="Mount S.M."/>
            <person name="Moy M."/>
            <person name="Murphy B."/>
            <person name="Murphy L."/>
            <person name="Muzny D.M."/>
            <person name="Nelson D.L."/>
            <person name="Nelson D.R."/>
            <person name="Nelson K.A."/>
            <person name="Nixon K."/>
            <person name="Nusskern D.R."/>
            <person name="Pacleb J.M."/>
            <person name="Palazzolo M."/>
            <person name="Pittman G.S."/>
            <person name="Pan S."/>
            <person name="Pollard J."/>
            <person name="Puri V."/>
            <person name="Reese M.G."/>
            <person name="Reinert K."/>
            <person name="Remington K."/>
            <person name="Saunders R.D.C."/>
            <person name="Scheeler F."/>
            <person name="Shen H."/>
            <person name="Shue B.C."/>
            <person name="Siden-Kiamos I."/>
            <person name="Simpson M."/>
            <person name="Skupski M.P."/>
            <person name="Smith T.J."/>
            <person name="Spier E."/>
            <person name="Spradling A.C."/>
            <person name="Stapleton M."/>
            <person name="Strong R."/>
            <person name="Sun E."/>
            <person name="Svirskas R."/>
            <person name="Tector C."/>
            <person name="Turner R."/>
            <person name="Venter E."/>
            <person name="Wang A.H."/>
            <person name="Wang X."/>
            <person name="Wang Z.-Y."/>
            <person name="Wassarman D.A."/>
            <person name="Weinstock G.M."/>
            <person name="Weissenbach J."/>
            <person name="Williams S.M."/>
            <person name="Woodage T."/>
            <person name="Worley K.C."/>
            <person name="Wu D."/>
            <person name="Yang S."/>
            <person name="Yao Q.A."/>
            <person name="Ye J."/>
            <person name="Yeh R.-F."/>
            <person name="Zaveri J.S."/>
            <person name="Zhan M."/>
            <person name="Zhang G."/>
            <person name="Zhao Q."/>
            <person name="Zheng L."/>
            <person name="Zheng X.H."/>
            <person name="Zhong F.N."/>
            <person name="Zhong W."/>
            <person name="Zhou X."/>
            <person name="Zhu S.C."/>
            <person name="Zhu X."/>
            <person name="Smith H.O."/>
            <person name="Gibbs R.A."/>
            <person name="Myers E.W."/>
            <person name="Rubin G.M."/>
            <person name="Venter J.C."/>
        </authorList>
    </citation>
    <scope>NUCLEOTIDE SEQUENCE [LARGE SCALE GENOMIC DNA]</scope>
    <source>
        <strain evidence="6">Berkeley</strain>
    </source>
</reference>
<reference key="4">
    <citation type="journal article" date="2002" name="Genome Biol.">
        <title>Annotation of the Drosophila melanogaster euchromatic genome: a systematic review.</title>
        <authorList>
            <person name="Misra S."/>
            <person name="Crosby M.A."/>
            <person name="Mungall C.J."/>
            <person name="Matthews B.B."/>
            <person name="Campbell K.S."/>
            <person name="Hradecky P."/>
            <person name="Huang Y."/>
            <person name="Kaminker J.S."/>
            <person name="Millburn G.H."/>
            <person name="Prochnik S.E."/>
            <person name="Smith C.D."/>
            <person name="Tupy J.L."/>
            <person name="Whitfield E.J."/>
            <person name="Bayraktaroglu L."/>
            <person name="Berman B.P."/>
            <person name="Bettencourt B.R."/>
            <person name="Celniker S.E."/>
            <person name="de Grey A.D.N.J."/>
            <person name="Drysdale R.A."/>
            <person name="Harris N.L."/>
            <person name="Richter J."/>
            <person name="Russo S."/>
            <person name="Schroeder A.J."/>
            <person name="Shu S.Q."/>
            <person name="Stapleton M."/>
            <person name="Yamada C."/>
            <person name="Ashburner M."/>
            <person name="Gelbart W.M."/>
            <person name="Rubin G.M."/>
            <person name="Lewis S.E."/>
        </authorList>
    </citation>
    <scope>GENOME REANNOTATION</scope>
    <scope>ALTERNATIVE SPLICING</scope>
    <source>
        <strain>Berkeley</strain>
    </source>
</reference>
<reference evidence="10 13" key="5">
    <citation type="journal article" date="2002" name="Genome Biol.">
        <title>A Drosophila full-length cDNA resource.</title>
        <authorList>
            <person name="Stapleton M."/>
            <person name="Carlson J.W."/>
            <person name="Brokstein P."/>
            <person name="Yu C."/>
            <person name="Champe M."/>
            <person name="George R.A."/>
            <person name="Guarin H."/>
            <person name="Kronmiller B."/>
            <person name="Pacleb J.M."/>
            <person name="Park S."/>
            <person name="Wan K.H."/>
            <person name="Rubin G.M."/>
            <person name="Celniker S.E."/>
        </authorList>
    </citation>
    <scope>NUCLEOTIDE SEQUENCE [LARGE SCALE MRNA] (ISOFORM C)</scope>
    <source>
        <strain evidence="8">Berkeley</strain>
        <tissue evidence="8">Head</tissue>
    </source>
</reference>
<gene>
    <name evidence="12" type="primary">GNBP2</name>
    <name type="ORF">CG4144</name>
</gene>
<name>BGBP2_DROME</name>
<accession>Q9VVR4</accession>
<accession>A0ZWZ5</accession>
<accession>A0ZWZ8</accession>
<accession>A0ZX11</accession>
<accession>A0ZX12</accession>
<accession>A0ZX13</accession>
<accession>A0ZX39</accession>
<accession>A0ZX40</accession>
<accession>A0ZX41</accession>
<accession>A0ZX42</accession>
<accession>Q8IQT6</accession>
<accession>Q8IQT7</accession>
<accession>Q95U68</accession>
<accession>Q9NHA9</accession>
<protein>
    <recommendedName>
        <fullName>Gram-negative bacteria-binding protein 2</fullName>
    </recommendedName>
</protein>
<feature type="signal peptide" evidence="3">
    <location>
        <begin position="1"/>
        <end position="20"/>
    </location>
</feature>
<feature type="chain" id="PRO_0000002818" description="Gram-negative bacteria-binding protein 2">
    <location>
        <begin position="21"/>
        <end position="461"/>
    </location>
</feature>
<feature type="domain" description="CBM39" evidence="5">
    <location>
        <begin position="21"/>
        <end position="115"/>
    </location>
</feature>
<feature type="domain" description="GH16" evidence="4">
    <location>
        <begin position="179"/>
        <end position="461"/>
    </location>
</feature>
<feature type="glycosylation site" description="N-linked (GlcNAc...) asparagine" evidence="3">
    <location>
        <position position="71"/>
    </location>
</feature>
<feature type="glycosylation site" description="N-linked (GlcNAc...) asparagine" evidence="3">
    <location>
        <position position="170"/>
    </location>
</feature>
<feature type="glycosylation site" description="N-linked (GlcNAc...) asparagine" evidence="3">
    <location>
        <position position="177"/>
    </location>
</feature>
<feature type="glycosylation site" description="N-linked (GlcNAc...) asparagine" evidence="3">
    <location>
        <position position="364"/>
    </location>
</feature>
<feature type="splice variant" id="VSP_051600" description="In isoform C and isoform D." evidence="9">
    <location>
        <begin position="1"/>
        <end position="51"/>
    </location>
</feature>
<feature type="splice variant" id="VSP_026674" description="In isoform A." evidence="10">
    <location>
        <begin position="1"/>
        <end position="29"/>
    </location>
</feature>
<feature type="splice variant" id="VSP_051601" description="In isoform C." evidence="9">
    <original>YL</original>
    <variation>CE</variation>
    <location>
        <begin position="291"/>
        <end position="292"/>
    </location>
</feature>
<feature type="splice variant" id="VSP_051602" description="In isoform C." evidence="9">
    <location>
        <begin position="293"/>
        <end position="461"/>
    </location>
</feature>
<feature type="sequence variant" description="In strain: Netherlands line N30.">
    <original>V</original>
    <variation>G</variation>
    <location>
        <position position="75"/>
    </location>
</feature>
<feature type="sequence variant" description="In strain: Netherlands line N07 and Netherlands line N14.">
    <original>I</original>
    <variation>M</variation>
    <location>
        <position position="400"/>
    </location>
</feature>
<organism>
    <name type="scientific">Drosophila melanogaster</name>
    <name type="common">Fruit fly</name>
    <dbReference type="NCBI Taxonomy" id="7227"/>
    <lineage>
        <taxon>Eukaryota</taxon>
        <taxon>Metazoa</taxon>
        <taxon>Ecdysozoa</taxon>
        <taxon>Arthropoda</taxon>
        <taxon>Hexapoda</taxon>
        <taxon>Insecta</taxon>
        <taxon>Pterygota</taxon>
        <taxon>Neoptera</taxon>
        <taxon>Endopterygota</taxon>
        <taxon>Diptera</taxon>
        <taxon>Brachycera</taxon>
        <taxon>Muscomorpha</taxon>
        <taxon>Ephydroidea</taxon>
        <taxon>Drosophilidae</taxon>
        <taxon>Drosophila</taxon>
        <taxon>Sophophora</taxon>
    </lineage>
</organism>
<sequence>MRWEFLPCLLLLISNNKIFGFKVPSINFEMLKDEGFEVSIPDEPGIQRVFYMFQIDDTCPALMDYITEAVNGSWVSKQKMSLQNNDKLQISMLVQFNEEIFEKSETRVIINTRLLTTKDSSSRGITFLTGEGECQAYLAPAQQAKRCKAAQTIVSNGRHTCQGELIFEDNFSEAQLNKTTWKHDIRQRMYHVEEELVAFDDAARNCFVKEGELHIVPTIATEVTDGSFKLGDRCTAVESPEQECNIAHGIFYSIKPPVFSAQIHTRNSFSFKFGKIVVRAKLPKGDWLFPYLMLQPVSTYAETHYAKQLRIAYARGNANLRTKQGDDISGNHLYGGGVVWHHGNAVQFLKDKISNSHYGDDFHNYTMIWQRDKITLMVDDEVYGELYDGLPFFNEKCFIIFGVTVGGFLNFDDSLLAKDVKPYKNREPRAALSFWQHRDAWAPTWGRHSAMVIDYVRVYAE</sequence>
<evidence type="ECO:0000250" key="1"/>
<evidence type="ECO:0000250" key="2">
    <source>
        <dbReference type="UniProtKB" id="Q9NHB0"/>
    </source>
</evidence>
<evidence type="ECO:0000255" key="3"/>
<evidence type="ECO:0000255" key="4">
    <source>
        <dbReference type="PROSITE-ProRule" id="PRU01098"/>
    </source>
</evidence>
<evidence type="ECO:0000255" key="5">
    <source>
        <dbReference type="PROSITE-ProRule" id="PRU01314"/>
    </source>
</evidence>
<evidence type="ECO:0000269" key="6">
    <source>
    </source>
</evidence>
<evidence type="ECO:0000269" key="7">
    <source>
    </source>
</evidence>
<evidence type="ECO:0000269" key="8">
    <source>
    </source>
</evidence>
<evidence type="ECO:0000303" key="9">
    <source>
    </source>
</evidence>
<evidence type="ECO:0000305" key="10"/>
<evidence type="ECO:0000312" key="11">
    <source>
        <dbReference type="EMBL" id="AAF33850.1"/>
    </source>
</evidence>
<evidence type="ECO:0000312" key="12">
    <source>
        <dbReference type="EMBL" id="AAF49245.3"/>
    </source>
</evidence>
<evidence type="ECO:0000312" key="13">
    <source>
        <dbReference type="EMBL" id="AAL13506.1"/>
    </source>
</evidence>